<name>PSBT_CANWI</name>
<accession>Q6EYK7</accession>
<feature type="chain" id="PRO_0000217912" description="Photosystem II reaction center protein T">
    <location>
        <begin position="1"/>
        <end position="35"/>
    </location>
</feature>
<feature type="transmembrane region" description="Helical" evidence="1">
    <location>
        <begin position="3"/>
        <end position="23"/>
    </location>
</feature>
<organism>
    <name type="scientific">Canella winterana</name>
    <name type="common">Wild cinnamon</name>
    <name type="synonym">Laurus winterana</name>
    <dbReference type="NCBI Taxonomy" id="3426"/>
    <lineage>
        <taxon>Eukaryota</taxon>
        <taxon>Viridiplantae</taxon>
        <taxon>Streptophyta</taxon>
        <taxon>Embryophyta</taxon>
        <taxon>Tracheophyta</taxon>
        <taxon>Spermatophyta</taxon>
        <taxon>Magnoliopsida</taxon>
        <taxon>Magnoliidae</taxon>
        <taxon>Canellales</taxon>
        <taxon>Canellaceae</taxon>
        <taxon>Canella</taxon>
    </lineage>
</organism>
<geneLocation type="chloroplast"/>
<proteinExistence type="inferred from homology"/>
<sequence length="35" mass="4077">MEALVYTFLLVSTLGIIFFAIFFREPPKVPTKKMK</sequence>
<evidence type="ECO:0000255" key="1">
    <source>
        <dbReference type="HAMAP-Rule" id="MF_00808"/>
    </source>
</evidence>
<gene>
    <name evidence="1" type="primary">psbT</name>
</gene>
<reference key="1">
    <citation type="submission" date="2002-07" db="EMBL/GenBank/DDBJ databases">
        <title>Parsing out signal and noise for seed-plant phylogenetic inference.</title>
        <authorList>
            <person name="Graham S.W."/>
            <person name="Rai H.S."/>
            <person name="Ikegami K."/>
            <person name="Reeves P.A."/>
            <person name="Olmstead R.G."/>
        </authorList>
    </citation>
    <scope>NUCLEOTIDE SEQUENCE [GENOMIC DNA]</scope>
</reference>
<comment type="function">
    <text evidence="1">Found at the monomer-monomer interface of the photosystem II (PS II) dimer, plays a role in assembly and dimerization of PSII. PSII is a light-driven water plastoquinone oxidoreductase, using light energy to abstract electrons from H(2)O, generating a proton gradient subsequently used for ATP formation.</text>
</comment>
<comment type="subunit">
    <text evidence="1">PSII is composed of 1 copy each of membrane proteins PsbA, PsbB, PsbC, PsbD, PsbE, PsbF, PsbH, PsbI, PsbJ, PsbK, PsbL, PsbM, PsbT, PsbY, PsbZ, Psb30/Ycf12, at least 3 peripheral proteins of the oxygen-evolving complex and a large number of cofactors. It forms dimeric complexes.</text>
</comment>
<comment type="subcellular location">
    <subcellularLocation>
        <location evidence="1">Plastid</location>
        <location evidence="1">Chloroplast thylakoid membrane</location>
        <topology evidence="1">Single-pass membrane protein</topology>
    </subcellularLocation>
</comment>
<comment type="similarity">
    <text evidence="1">Belongs to the PsbT family.</text>
</comment>
<dbReference type="EMBL" id="AF528895">
    <property type="protein sequence ID" value="AAQ09366.1"/>
    <property type="molecule type" value="Genomic_DNA"/>
</dbReference>
<dbReference type="SMR" id="Q6EYK7"/>
<dbReference type="GO" id="GO:0009535">
    <property type="term" value="C:chloroplast thylakoid membrane"/>
    <property type="evidence" value="ECO:0007669"/>
    <property type="project" value="UniProtKB-SubCell"/>
</dbReference>
<dbReference type="GO" id="GO:0009539">
    <property type="term" value="C:photosystem II reaction center"/>
    <property type="evidence" value="ECO:0007669"/>
    <property type="project" value="InterPro"/>
</dbReference>
<dbReference type="GO" id="GO:0015979">
    <property type="term" value="P:photosynthesis"/>
    <property type="evidence" value="ECO:0007669"/>
    <property type="project" value="UniProtKB-UniRule"/>
</dbReference>
<dbReference type="HAMAP" id="MF_00808">
    <property type="entry name" value="PSII_PsbT"/>
    <property type="match status" value="1"/>
</dbReference>
<dbReference type="InterPro" id="IPR001743">
    <property type="entry name" value="PSII_PsbT"/>
</dbReference>
<dbReference type="InterPro" id="IPR037268">
    <property type="entry name" value="PSII_PsbT_sf"/>
</dbReference>
<dbReference type="PANTHER" id="PTHR36411">
    <property type="match status" value="1"/>
</dbReference>
<dbReference type="PANTHER" id="PTHR36411:SF2">
    <property type="entry name" value="PHOTOSYSTEM II REACTION CENTER PROTEIN T"/>
    <property type="match status" value="1"/>
</dbReference>
<dbReference type="Pfam" id="PF01405">
    <property type="entry name" value="PsbT"/>
    <property type="match status" value="1"/>
</dbReference>
<dbReference type="SUPFAM" id="SSF161029">
    <property type="entry name" value="Photosystem II reaction center protein T, PsbT"/>
    <property type="match status" value="1"/>
</dbReference>
<keyword id="KW-0150">Chloroplast</keyword>
<keyword id="KW-0472">Membrane</keyword>
<keyword id="KW-0602">Photosynthesis</keyword>
<keyword id="KW-0604">Photosystem II</keyword>
<keyword id="KW-0934">Plastid</keyword>
<keyword id="KW-0793">Thylakoid</keyword>
<keyword id="KW-0812">Transmembrane</keyword>
<keyword id="KW-1133">Transmembrane helix</keyword>
<protein>
    <recommendedName>
        <fullName evidence="1">Photosystem II reaction center protein T</fullName>
        <shortName evidence="1">PSII-T</shortName>
    </recommendedName>
</protein>